<proteinExistence type="inferred from homology"/>
<gene>
    <name evidence="1" type="primary">hisB</name>
    <name type="ordered locus">JTY_1614</name>
</gene>
<reference key="1">
    <citation type="journal article" date="2009" name="Vaccine">
        <title>Whole genome sequence analysis of Mycobacterium bovis bacillus Calmette-Guerin (BCG) Tokyo 172: a comparative study of BCG vaccine substrains.</title>
        <authorList>
            <person name="Seki M."/>
            <person name="Honda I."/>
            <person name="Fujita I."/>
            <person name="Yano I."/>
            <person name="Yamamoto S."/>
            <person name="Koyama A."/>
        </authorList>
    </citation>
    <scope>NUCLEOTIDE SEQUENCE [LARGE SCALE GENOMIC DNA]</scope>
    <source>
        <strain>BCG / Tokyo 172 / ATCC 35737 / TMC 1019</strain>
    </source>
</reference>
<protein>
    <recommendedName>
        <fullName evidence="1">Imidazoleglycerol-phosphate dehydratase</fullName>
        <shortName evidence="1">IGPD</shortName>
        <ecNumber evidence="1">4.2.1.19</ecNumber>
    </recommendedName>
</protein>
<sequence length="210" mass="22770">MTTTQTAKASRRARIERRTRESDIVIELDLDGTGQVAVDTGVPFYDHMLTALGSHASFDLTVRATGDVEIEAHHTIEDTAIALGTALGQALGDKRGIRRFGDAFIPMDETLAHAAVDLSGRPYCVHTGEPDHLQHTTIAGSSVPYHTVINRHVFESLAANARIALHVRVLYGRDPHHITEAQYKAVARALRQAVEPDPRVSGVPSTKGAL</sequence>
<name>HIS7_MYCBT</name>
<organism>
    <name type="scientific">Mycobacterium bovis (strain BCG / Tokyo 172 / ATCC 35737 / TMC 1019)</name>
    <dbReference type="NCBI Taxonomy" id="561275"/>
    <lineage>
        <taxon>Bacteria</taxon>
        <taxon>Bacillati</taxon>
        <taxon>Actinomycetota</taxon>
        <taxon>Actinomycetes</taxon>
        <taxon>Mycobacteriales</taxon>
        <taxon>Mycobacteriaceae</taxon>
        <taxon>Mycobacterium</taxon>
        <taxon>Mycobacterium tuberculosis complex</taxon>
    </lineage>
</organism>
<evidence type="ECO:0000255" key="1">
    <source>
        <dbReference type="HAMAP-Rule" id="MF_00076"/>
    </source>
</evidence>
<accession>C1ANM3</accession>
<feature type="chain" id="PRO_1000190618" description="Imidazoleglycerol-phosphate dehydratase">
    <location>
        <begin position="1"/>
        <end position="210"/>
    </location>
</feature>
<dbReference type="EC" id="4.2.1.19" evidence="1"/>
<dbReference type="EMBL" id="AP010918">
    <property type="protein sequence ID" value="BAH25902.1"/>
    <property type="molecule type" value="Genomic_DNA"/>
</dbReference>
<dbReference type="RefSeq" id="WP_003407950.1">
    <property type="nucleotide sequence ID" value="NZ_CP014566.1"/>
</dbReference>
<dbReference type="SMR" id="C1ANM3"/>
<dbReference type="KEGG" id="mbt:JTY_1614"/>
<dbReference type="HOGENOM" id="CLU_044308_3_0_11"/>
<dbReference type="UniPathway" id="UPA00031">
    <property type="reaction ID" value="UER00011"/>
</dbReference>
<dbReference type="GO" id="GO:0005737">
    <property type="term" value="C:cytoplasm"/>
    <property type="evidence" value="ECO:0007669"/>
    <property type="project" value="UniProtKB-SubCell"/>
</dbReference>
<dbReference type="GO" id="GO:0004424">
    <property type="term" value="F:imidazoleglycerol-phosphate dehydratase activity"/>
    <property type="evidence" value="ECO:0007669"/>
    <property type="project" value="UniProtKB-UniRule"/>
</dbReference>
<dbReference type="GO" id="GO:0000105">
    <property type="term" value="P:L-histidine biosynthetic process"/>
    <property type="evidence" value="ECO:0007669"/>
    <property type="project" value="UniProtKB-UniRule"/>
</dbReference>
<dbReference type="CDD" id="cd07914">
    <property type="entry name" value="IGPD"/>
    <property type="match status" value="1"/>
</dbReference>
<dbReference type="FunFam" id="3.30.230.40:FF:000001">
    <property type="entry name" value="Imidazoleglycerol-phosphate dehydratase HisB"/>
    <property type="match status" value="1"/>
</dbReference>
<dbReference type="FunFam" id="3.30.230.40:FF:000003">
    <property type="entry name" value="Imidazoleglycerol-phosphate dehydratase HisB"/>
    <property type="match status" value="1"/>
</dbReference>
<dbReference type="Gene3D" id="3.30.230.40">
    <property type="entry name" value="Imidazole glycerol phosphate dehydratase, domain 1"/>
    <property type="match status" value="2"/>
</dbReference>
<dbReference type="HAMAP" id="MF_00076">
    <property type="entry name" value="HisB"/>
    <property type="match status" value="1"/>
</dbReference>
<dbReference type="InterPro" id="IPR038494">
    <property type="entry name" value="IGPD_sf"/>
</dbReference>
<dbReference type="InterPro" id="IPR000807">
    <property type="entry name" value="ImidazoleglycerolP_deHydtase"/>
</dbReference>
<dbReference type="InterPro" id="IPR020565">
    <property type="entry name" value="ImidazoleglycerP_deHydtase_CS"/>
</dbReference>
<dbReference type="InterPro" id="IPR020568">
    <property type="entry name" value="Ribosomal_Su5_D2-typ_SF"/>
</dbReference>
<dbReference type="NCBIfam" id="NF002110">
    <property type="entry name" value="PRK00951.1-6"/>
    <property type="match status" value="1"/>
</dbReference>
<dbReference type="NCBIfam" id="NF002111">
    <property type="entry name" value="PRK00951.2-1"/>
    <property type="match status" value="1"/>
</dbReference>
<dbReference type="NCBIfam" id="NF002114">
    <property type="entry name" value="PRK00951.2-4"/>
    <property type="match status" value="1"/>
</dbReference>
<dbReference type="PANTHER" id="PTHR23133:SF2">
    <property type="entry name" value="IMIDAZOLEGLYCEROL-PHOSPHATE DEHYDRATASE"/>
    <property type="match status" value="1"/>
</dbReference>
<dbReference type="PANTHER" id="PTHR23133">
    <property type="entry name" value="IMIDAZOLEGLYCEROL-PHOSPHATE DEHYDRATASE HIS7"/>
    <property type="match status" value="1"/>
</dbReference>
<dbReference type="Pfam" id="PF00475">
    <property type="entry name" value="IGPD"/>
    <property type="match status" value="1"/>
</dbReference>
<dbReference type="SUPFAM" id="SSF54211">
    <property type="entry name" value="Ribosomal protein S5 domain 2-like"/>
    <property type="match status" value="2"/>
</dbReference>
<dbReference type="PROSITE" id="PS00954">
    <property type="entry name" value="IGP_DEHYDRATASE_1"/>
    <property type="match status" value="1"/>
</dbReference>
<dbReference type="PROSITE" id="PS00955">
    <property type="entry name" value="IGP_DEHYDRATASE_2"/>
    <property type="match status" value="1"/>
</dbReference>
<comment type="catalytic activity">
    <reaction evidence="1">
        <text>D-erythro-1-(imidazol-4-yl)glycerol 3-phosphate = 3-(imidazol-4-yl)-2-oxopropyl phosphate + H2O</text>
        <dbReference type="Rhea" id="RHEA:11040"/>
        <dbReference type="ChEBI" id="CHEBI:15377"/>
        <dbReference type="ChEBI" id="CHEBI:57766"/>
        <dbReference type="ChEBI" id="CHEBI:58278"/>
        <dbReference type="EC" id="4.2.1.19"/>
    </reaction>
</comment>
<comment type="pathway">
    <text evidence="1">Amino-acid biosynthesis; L-histidine biosynthesis; L-histidine from 5-phospho-alpha-D-ribose 1-diphosphate: step 6/9.</text>
</comment>
<comment type="subcellular location">
    <subcellularLocation>
        <location evidence="1">Cytoplasm</location>
    </subcellularLocation>
</comment>
<comment type="similarity">
    <text evidence="1">Belongs to the imidazoleglycerol-phosphate dehydratase family.</text>
</comment>
<keyword id="KW-0028">Amino-acid biosynthesis</keyword>
<keyword id="KW-0963">Cytoplasm</keyword>
<keyword id="KW-0368">Histidine biosynthesis</keyword>
<keyword id="KW-0456">Lyase</keyword>